<protein>
    <recommendedName>
        <fullName>Anoctamin-5</fullName>
    </recommendedName>
    <alternativeName>
        <fullName>Gnathodiaphyseal dysplasia 1 protein homolog</fullName>
    </alternativeName>
    <alternativeName>
        <fullName>Transmembrane protein 16E</fullName>
    </alternativeName>
</protein>
<evidence type="ECO:0000250" key="1">
    <source>
        <dbReference type="UniProtKB" id="Q75V66"/>
    </source>
</evidence>
<evidence type="ECO:0000255" key="2"/>
<evidence type="ECO:0000269" key="3">
    <source>
    </source>
</evidence>
<evidence type="ECO:0000269" key="4">
    <source>
    </source>
</evidence>
<evidence type="ECO:0000269" key="5">
    <source>
    </source>
</evidence>
<evidence type="ECO:0000269" key="6">
    <source>
    </source>
</evidence>
<evidence type="ECO:0000269" key="7">
    <source>
    </source>
</evidence>
<evidence type="ECO:0000303" key="8">
    <source>
    </source>
</evidence>
<evidence type="ECO:0000303" key="9">
    <source>
    </source>
</evidence>
<evidence type="ECO:0000305" key="10"/>
<dbReference type="EMBL" id="AB125740">
    <property type="protein sequence ID" value="BAD17873.1"/>
    <property type="molecule type" value="mRNA"/>
</dbReference>
<dbReference type="EMBL" id="AB206762">
    <property type="protein sequence ID" value="BAE44438.1"/>
    <property type="molecule type" value="mRNA"/>
</dbReference>
<dbReference type="EMBL" id="AK034197">
    <property type="protein sequence ID" value="BAC28628.1"/>
    <property type="molecule type" value="mRNA"/>
</dbReference>
<dbReference type="EMBL" id="BC109163">
    <property type="protein sequence ID" value="AAI09164.2"/>
    <property type="molecule type" value="mRNA"/>
</dbReference>
<dbReference type="CCDS" id="CCDS39968.1">
    <molecule id="Q75UR0-1"/>
</dbReference>
<dbReference type="CCDS" id="CCDS85311.1">
    <molecule id="Q75UR0-3"/>
</dbReference>
<dbReference type="RefSeq" id="NP_001258808.1">
    <molecule id="Q75UR0-3"/>
    <property type="nucleotide sequence ID" value="NM_001271879.2"/>
</dbReference>
<dbReference type="RefSeq" id="NP_808362.2">
    <molecule id="Q75UR0-1"/>
    <property type="nucleotide sequence ID" value="NM_177694.7"/>
</dbReference>
<dbReference type="SMR" id="Q75UR0"/>
<dbReference type="FunCoup" id="Q75UR0">
    <property type="interactions" value="196"/>
</dbReference>
<dbReference type="STRING" id="10090.ENSMUSP00000046884"/>
<dbReference type="TCDB" id="1.A.17.1.2">
    <property type="family name" value="the calcium-dependent chloride channel (ca-clc) family"/>
</dbReference>
<dbReference type="GlyCosmos" id="Q75UR0">
    <property type="glycosylation" value="6 sites, No reported glycans"/>
</dbReference>
<dbReference type="GlyGen" id="Q75UR0">
    <property type="glycosylation" value="6 sites"/>
</dbReference>
<dbReference type="iPTMnet" id="Q75UR0"/>
<dbReference type="PhosphoSitePlus" id="Q75UR0"/>
<dbReference type="PaxDb" id="10090-ENSMUSP00000046884"/>
<dbReference type="Antibodypedia" id="53749">
    <property type="antibodies" value="83 antibodies from 18 providers"/>
</dbReference>
<dbReference type="Ensembl" id="ENSMUST00000043944.6">
    <molecule id="Q75UR0-1"/>
    <property type="protein sequence ID" value="ENSMUSP00000046884.6"/>
    <property type="gene ID" value="ENSMUSG00000055489.9"/>
</dbReference>
<dbReference type="Ensembl" id="ENSMUST00000207044.2">
    <molecule id="Q75UR0-2"/>
    <property type="protein sequence ID" value="ENSMUSP00000147243.2"/>
    <property type="gene ID" value="ENSMUSG00000055489.9"/>
</dbReference>
<dbReference type="Ensembl" id="ENSMUST00000207717.2">
    <molecule id="Q75UR0-3"/>
    <property type="protein sequence ID" value="ENSMUSP00000146783.2"/>
    <property type="gene ID" value="ENSMUSG00000055489.9"/>
</dbReference>
<dbReference type="GeneID" id="233246"/>
<dbReference type="KEGG" id="mmu:233246"/>
<dbReference type="UCSC" id="uc009hcc.2">
    <molecule id="Q75UR0-1"/>
    <property type="organism name" value="mouse"/>
</dbReference>
<dbReference type="UCSC" id="uc009hce.2">
    <molecule id="Q75UR0-2"/>
    <property type="organism name" value="mouse"/>
</dbReference>
<dbReference type="UCSC" id="uc033izs.1">
    <molecule id="Q75UR0-3"/>
    <property type="organism name" value="mouse"/>
</dbReference>
<dbReference type="AGR" id="MGI:3576659"/>
<dbReference type="CTD" id="203859"/>
<dbReference type="MGI" id="MGI:3576659">
    <property type="gene designation" value="Ano5"/>
</dbReference>
<dbReference type="VEuPathDB" id="HostDB:ENSMUSG00000055489"/>
<dbReference type="eggNOG" id="KOG2514">
    <property type="taxonomic scope" value="Eukaryota"/>
</dbReference>
<dbReference type="GeneTree" id="ENSGT00940000155692"/>
<dbReference type="HOGENOM" id="CLU_006685_1_4_1"/>
<dbReference type="InParanoid" id="Q75UR0"/>
<dbReference type="OMA" id="LRNVQYW"/>
<dbReference type="OrthoDB" id="296386at2759"/>
<dbReference type="PhylomeDB" id="Q75UR0"/>
<dbReference type="TreeFam" id="TF314265"/>
<dbReference type="Reactome" id="R-MMU-2672351">
    <property type="pathway name" value="Stimuli-sensing channels"/>
</dbReference>
<dbReference type="BioGRID-ORCS" id="233246">
    <property type="hits" value="2 hits in 78 CRISPR screens"/>
</dbReference>
<dbReference type="PRO" id="PR:Q75UR0"/>
<dbReference type="Proteomes" id="UP000000589">
    <property type="component" value="Chromosome 7"/>
</dbReference>
<dbReference type="RNAct" id="Q75UR0">
    <property type="molecule type" value="protein"/>
</dbReference>
<dbReference type="Bgee" id="ENSMUSG00000055489">
    <property type="expression patterns" value="Expressed in quadriceps femoris and 49 other cell types or tissues"/>
</dbReference>
<dbReference type="GO" id="GO:0005789">
    <property type="term" value="C:endoplasmic reticulum membrane"/>
    <property type="evidence" value="ECO:0007669"/>
    <property type="project" value="UniProtKB-SubCell"/>
</dbReference>
<dbReference type="GO" id="GO:0005886">
    <property type="term" value="C:plasma membrane"/>
    <property type="evidence" value="ECO:0007669"/>
    <property type="project" value="UniProtKB-SubCell"/>
</dbReference>
<dbReference type="GO" id="GO:0031982">
    <property type="term" value="C:vesicle"/>
    <property type="evidence" value="ECO:0000314"/>
    <property type="project" value="MGI"/>
</dbReference>
<dbReference type="GO" id="GO:0005229">
    <property type="term" value="F:intracellularly calcium-gated chloride channel activity"/>
    <property type="evidence" value="ECO:0007669"/>
    <property type="project" value="Ensembl"/>
</dbReference>
<dbReference type="GO" id="GO:0046983">
    <property type="term" value="F:protein dimerization activity"/>
    <property type="evidence" value="ECO:0007669"/>
    <property type="project" value="InterPro"/>
</dbReference>
<dbReference type="GO" id="GO:0001778">
    <property type="term" value="P:plasma membrane repair"/>
    <property type="evidence" value="ECO:0000250"/>
    <property type="project" value="UniProtKB"/>
</dbReference>
<dbReference type="InterPro" id="IPR032394">
    <property type="entry name" value="Anoct_dimer"/>
</dbReference>
<dbReference type="InterPro" id="IPR007632">
    <property type="entry name" value="Anoctamin"/>
</dbReference>
<dbReference type="InterPro" id="IPR049452">
    <property type="entry name" value="Anoctamin_TM"/>
</dbReference>
<dbReference type="PANTHER" id="PTHR12308">
    <property type="entry name" value="ANOCTAMIN"/>
    <property type="match status" value="1"/>
</dbReference>
<dbReference type="PANTHER" id="PTHR12308:SF23">
    <property type="entry name" value="ANOCTAMIN-5"/>
    <property type="match status" value="1"/>
</dbReference>
<dbReference type="Pfam" id="PF16178">
    <property type="entry name" value="Anoct_dimer"/>
    <property type="match status" value="1"/>
</dbReference>
<dbReference type="Pfam" id="PF04547">
    <property type="entry name" value="Anoctamin"/>
    <property type="match status" value="1"/>
</dbReference>
<keyword id="KW-0025">Alternative splicing</keyword>
<keyword id="KW-1003">Cell membrane</keyword>
<keyword id="KW-0256">Endoplasmic reticulum</keyword>
<keyword id="KW-0325">Glycoprotein</keyword>
<keyword id="KW-0472">Membrane</keyword>
<keyword id="KW-1185">Reference proteome</keyword>
<keyword id="KW-0812">Transmembrane</keyword>
<keyword id="KW-1133">Transmembrane helix</keyword>
<reference key="1">
    <citation type="journal article" date="2004" name="Am. J. Hum. Genet.">
        <title>The novel gene encoding a putative transmembrane protein is mutated in gnathodiaphyseal dysplasia (GDD).</title>
        <authorList>
            <person name="Tsutsumi S."/>
            <person name="Kamata N."/>
            <person name="Vokes T.J."/>
            <person name="Maruoka Y."/>
            <person name="Nakakuki K."/>
            <person name="Enomoto S."/>
            <person name="Omura K."/>
            <person name="Amagasa T."/>
            <person name="Nagayama M."/>
            <person name="Saito-Ohara F."/>
            <person name="Inazawa J."/>
            <person name="Moritani M."/>
            <person name="Yamaoka T."/>
            <person name="Inoue H."/>
            <person name="Itakura M."/>
        </authorList>
    </citation>
    <scope>NUCLEOTIDE SEQUENCE [MRNA] (ISOFORM 1)</scope>
    <scope>ALTERNATIVE SPLICING</scope>
    <scope>TISSUE SPECIFICITY</scope>
    <scope>INDUCTION</scope>
    <source>
        <strain>BALB/cJ</strain>
        <tissue>Skeletal muscle</tissue>
    </source>
</reference>
<reference key="2">
    <citation type="journal article" date="2005" name="Biochem. Biophys. Res. Commun.">
        <title>Molecular cloning and characterization of the murine gnathodiaphyseal dysplasia gene GDD1.</title>
        <authorList>
            <person name="Tsutsumi S."/>
            <person name="Inoue H."/>
            <person name="Sakamoto Y."/>
            <person name="Mizuta K."/>
            <person name="Kamata N."/>
            <person name="Itakura M."/>
        </authorList>
    </citation>
    <scope>NUCLEOTIDE SEQUENCE [MRNA] (ISOFORM 1)</scope>
    <scope>ALTERNATIVE SPLICING</scope>
    <scope>TISSUE SPECIFICITY</scope>
    <scope>INDUCTION</scope>
    <source>
        <strain>BDF1</strain>
        <tissue>Skeletal muscle</tissue>
    </source>
</reference>
<reference key="3">
    <citation type="journal article" date="2005" name="Science">
        <title>The transcriptional landscape of the mammalian genome.</title>
        <authorList>
            <person name="Carninci P."/>
            <person name="Kasukawa T."/>
            <person name="Katayama S."/>
            <person name="Gough J."/>
            <person name="Frith M.C."/>
            <person name="Maeda N."/>
            <person name="Oyama R."/>
            <person name="Ravasi T."/>
            <person name="Lenhard B."/>
            <person name="Wells C."/>
            <person name="Kodzius R."/>
            <person name="Shimokawa K."/>
            <person name="Bajic V.B."/>
            <person name="Brenner S.E."/>
            <person name="Batalov S."/>
            <person name="Forrest A.R."/>
            <person name="Zavolan M."/>
            <person name="Davis M.J."/>
            <person name="Wilming L.G."/>
            <person name="Aidinis V."/>
            <person name="Allen J.E."/>
            <person name="Ambesi-Impiombato A."/>
            <person name="Apweiler R."/>
            <person name="Aturaliya R.N."/>
            <person name="Bailey T.L."/>
            <person name="Bansal M."/>
            <person name="Baxter L."/>
            <person name="Beisel K.W."/>
            <person name="Bersano T."/>
            <person name="Bono H."/>
            <person name="Chalk A.M."/>
            <person name="Chiu K.P."/>
            <person name="Choudhary V."/>
            <person name="Christoffels A."/>
            <person name="Clutterbuck D.R."/>
            <person name="Crowe M.L."/>
            <person name="Dalla E."/>
            <person name="Dalrymple B.P."/>
            <person name="de Bono B."/>
            <person name="Della Gatta G."/>
            <person name="di Bernardo D."/>
            <person name="Down T."/>
            <person name="Engstrom P."/>
            <person name="Fagiolini M."/>
            <person name="Faulkner G."/>
            <person name="Fletcher C.F."/>
            <person name="Fukushima T."/>
            <person name="Furuno M."/>
            <person name="Futaki S."/>
            <person name="Gariboldi M."/>
            <person name="Georgii-Hemming P."/>
            <person name="Gingeras T.R."/>
            <person name="Gojobori T."/>
            <person name="Green R.E."/>
            <person name="Gustincich S."/>
            <person name="Harbers M."/>
            <person name="Hayashi Y."/>
            <person name="Hensch T.K."/>
            <person name="Hirokawa N."/>
            <person name="Hill D."/>
            <person name="Huminiecki L."/>
            <person name="Iacono M."/>
            <person name="Ikeo K."/>
            <person name="Iwama A."/>
            <person name="Ishikawa T."/>
            <person name="Jakt M."/>
            <person name="Kanapin A."/>
            <person name="Katoh M."/>
            <person name="Kawasawa Y."/>
            <person name="Kelso J."/>
            <person name="Kitamura H."/>
            <person name="Kitano H."/>
            <person name="Kollias G."/>
            <person name="Krishnan S.P."/>
            <person name="Kruger A."/>
            <person name="Kummerfeld S.K."/>
            <person name="Kurochkin I.V."/>
            <person name="Lareau L.F."/>
            <person name="Lazarevic D."/>
            <person name="Lipovich L."/>
            <person name="Liu J."/>
            <person name="Liuni S."/>
            <person name="McWilliam S."/>
            <person name="Madan Babu M."/>
            <person name="Madera M."/>
            <person name="Marchionni L."/>
            <person name="Matsuda H."/>
            <person name="Matsuzawa S."/>
            <person name="Miki H."/>
            <person name="Mignone F."/>
            <person name="Miyake S."/>
            <person name="Morris K."/>
            <person name="Mottagui-Tabar S."/>
            <person name="Mulder N."/>
            <person name="Nakano N."/>
            <person name="Nakauchi H."/>
            <person name="Ng P."/>
            <person name="Nilsson R."/>
            <person name="Nishiguchi S."/>
            <person name="Nishikawa S."/>
            <person name="Nori F."/>
            <person name="Ohara O."/>
            <person name="Okazaki Y."/>
            <person name="Orlando V."/>
            <person name="Pang K.C."/>
            <person name="Pavan W.J."/>
            <person name="Pavesi G."/>
            <person name="Pesole G."/>
            <person name="Petrovsky N."/>
            <person name="Piazza S."/>
            <person name="Reed J."/>
            <person name="Reid J.F."/>
            <person name="Ring B.Z."/>
            <person name="Ringwald M."/>
            <person name="Rost B."/>
            <person name="Ruan Y."/>
            <person name="Salzberg S.L."/>
            <person name="Sandelin A."/>
            <person name="Schneider C."/>
            <person name="Schoenbach C."/>
            <person name="Sekiguchi K."/>
            <person name="Semple C.A."/>
            <person name="Seno S."/>
            <person name="Sessa L."/>
            <person name="Sheng Y."/>
            <person name="Shibata Y."/>
            <person name="Shimada H."/>
            <person name="Shimada K."/>
            <person name="Silva D."/>
            <person name="Sinclair B."/>
            <person name="Sperling S."/>
            <person name="Stupka E."/>
            <person name="Sugiura K."/>
            <person name="Sultana R."/>
            <person name="Takenaka Y."/>
            <person name="Taki K."/>
            <person name="Tammoja K."/>
            <person name="Tan S.L."/>
            <person name="Tang S."/>
            <person name="Taylor M.S."/>
            <person name="Tegner J."/>
            <person name="Teichmann S.A."/>
            <person name="Ueda H.R."/>
            <person name="van Nimwegen E."/>
            <person name="Verardo R."/>
            <person name="Wei C.L."/>
            <person name="Yagi K."/>
            <person name="Yamanishi H."/>
            <person name="Zabarovsky E."/>
            <person name="Zhu S."/>
            <person name="Zimmer A."/>
            <person name="Hide W."/>
            <person name="Bult C."/>
            <person name="Grimmond S.M."/>
            <person name="Teasdale R.D."/>
            <person name="Liu E.T."/>
            <person name="Brusic V."/>
            <person name="Quackenbush J."/>
            <person name="Wahlestedt C."/>
            <person name="Mattick J.S."/>
            <person name="Hume D.A."/>
            <person name="Kai C."/>
            <person name="Sasaki D."/>
            <person name="Tomaru Y."/>
            <person name="Fukuda S."/>
            <person name="Kanamori-Katayama M."/>
            <person name="Suzuki M."/>
            <person name="Aoki J."/>
            <person name="Arakawa T."/>
            <person name="Iida J."/>
            <person name="Imamura K."/>
            <person name="Itoh M."/>
            <person name="Kato T."/>
            <person name="Kawaji H."/>
            <person name="Kawagashira N."/>
            <person name="Kawashima T."/>
            <person name="Kojima M."/>
            <person name="Kondo S."/>
            <person name="Konno H."/>
            <person name="Nakano K."/>
            <person name="Ninomiya N."/>
            <person name="Nishio T."/>
            <person name="Okada M."/>
            <person name="Plessy C."/>
            <person name="Shibata K."/>
            <person name="Shiraki T."/>
            <person name="Suzuki S."/>
            <person name="Tagami M."/>
            <person name="Waki K."/>
            <person name="Watahiki A."/>
            <person name="Okamura-Oho Y."/>
            <person name="Suzuki H."/>
            <person name="Kawai J."/>
            <person name="Hayashizaki Y."/>
        </authorList>
    </citation>
    <scope>NUCLEOTIDE SEQUENCE [LARGE SCALE MRNA] (ISOFORM 2)</scope>
    <source>
        <strain>C57BL/6J</strain>
        <tissue>Diencephalon</tissue>
    </source>
</reference>
<reference key="4">
    <citation type="journal article" date="2004" name="Genome Res.">
        <title>The status, quality, and expansion of the NIH full-length cDNA project: the Mammalian Gene Collection (MGC).</title>
        <authorList>
            <consortium name="The MGC Project Team"/>
        </authorList>
    </citation>
    <scope>NUCLEOTIDE SEQUENCE [LARGE SCALE MRNA] (ISOFORM 3)</scope>
</reference>
<reference key="5">
    <citation type="journal article" date="2007" name="Biochem. Biophys. Res. Commun.">
        <title>Molecular characterization of GDD1/TMEM16E, the gene product responsible for autosomal dominant gnathodiaphyseal dysplasia.</title>
        <authorList>
            <person name="Mizuta K."/>
            <person name="Tsutsumi S."/>
            <person name="Inoue H."/>
            <person name="Sakamoto Y."/>
            <person name="Miyatake K."/>
            <person name="Miyawaki K."/>
            <person name="Noji S."/>
            <person name="Kamata N."/>
            <person name="Itakura M."/>
        </authorList>
    </citation>
    <scope>SUBCELLULAR LOCATION</scope>
    <scope>TISSUE SPECIFICITY</scope>
    <scope>DEVELOPMENTAL STAGE</scope>
</reference>
<reference key="6">
    <citation type="journal article" date="2010" name="J. Biol. Chem.">
        <title>Expression and function of epithelial anoctamins.</title>
        <authorList>
            <person name="Schreiber R."/>
            <person name="Uliyakina I."/>
            <person name="Kongsuphol P."/>
            <person name="Warth R."/>
            <person name="Mirza M."/>
            <person name="Martins J.R."/>
            <person name="Kunzelmann K."/>
        </authorList>
    </citation>
    <scope>TISSUE SPECIFICITY</scope>
</reference>
<reference key="7">
    <citation type="journal article" date="2012" name="Exp. Physiol.">
        <title>The anoctamin (TMEM16) gene family: calcium-activated chloride channels come of age.</title>
        <authorList>
            <person name="Winpenny J.P."/>
            <person name="Gray M.A."/>
        </authorList>
    </citation>
    <scope>REVIEW</scope>
</reference>
<reference key="8">
    <citation type="journal article" date="2021" name="J. Cell Biol.">
        <title>ANO5 ensures trafficking of annexins in wounded myofibers.</title>
        <authorList>
            <person name="Foltz S.J."/>
            <person name="Cui Y.Y."/>
            <person name="Choo H.J."/>
            <person name="Hartzell H.C."/>
        </authorList>
    </citation>
    <scope>FUNCTION</scope>
</reference>
<sequence length="904" mass="106214">MVEQEGLTAKEIDYAFQQNENLGSKETSFLIPEDLQSPPEKRFNLFLRRRLMFQRSEHSKDSVFFRDGIRQIDFVLSYVEDLKKDGELKAERRREFEQNLRKTGLDLETEDKLNSEDGKTYFVKIHAPWEVLVTYAEVLGIKMPIKLSDIPRPKYPPLSYMLGAVKLPSSVKYPTPEYFTAQFSRHRQELFLIEDEATFFPSSTRNRIVYYILSRCPFGVEEGKKKIGIERLLNSNTYLSAYPLHDGQYWKPSKTTRPNERYNLCKNWARFSYFYKEQPFHLIRNYFGEKIGIYFVFLGYYTEMLLFAALVGLACFIYGLLSMENNRTSTEICDPDIGGQMIMCPLCDEVCDYWRLNTTCLHSKFSHLFDNESTVFFALFMGIWVTLFLEFWKQRQARLEYEWDLVDFEEEQQQLQLRPEFEAMCKHKKMNPVTKEMEPHMPLCHRIPWYFVSGTTVTFGMALLLSSMVSILIYRLSVFATFASFMESEATLQSVKSFFTPQLATALSGSCLNCIVILILNFFYEKISAWITKMEIPRTHQEYESSLTLKMFLFQFVNYYSSCFYVAFFKGKFVGYPGSYTYMFNIWRSEECGPAGCLIELTTQLTIIMIGKQIFGNIHEAFQPLIFNWWRRRRARTHSEKLYSRWEQDHDLQVYGHRGLFYEYLETVIQFGFATLFVASFPLAPLFALMNNIMGIRVDAWKLTTQYRRPVAAKAHSIGVWQDILFGMAIVSVATNAFIVSFTSDIIPRLVYFYAYSTNSTEPLSGYVNNSLSVFLIADFPNHTVPMEKKDFVTCRYRDYRYPPDHEDKYSHNMQFWHVLAAKMTFIIVMEHVVFLFKFLLAWLIPDVPKDVVEKIKREKLMTIKIIHDFELNKLKENLDVEYGNIMKNVLVDEDNSLKAKTTV</sequence>
<name>ANO5_MOUSE</name>
<organism>
    <name type="scientific">Mus musculus</name>
    <name type="common">Mouse</name>
    <dbReference type="NCBI Taxonomy" id="10090"/>
    <lineage>
        <taxon>Eukaryota</taxon>
        <taxon>Metazoa</taxon>
        <taxon>Chordata</taxon>
        <taxon>Craniata</taxon>
        <taxon>Vertebrata</taxon>
        <taxon>Euteleostomi</taxon>
        <taxon>Mammalia</taxon>
        <taxon>Eutheria</taxon>
        <taxon>Euarchontoglires</taxon>
        <taxon>Glires</taxon>
        <taxon>Rodentia</taxon>
        <taxon>Myomorpha</taxon>
        <taxon>Muroidea</taxon>
        <taxon>Muridae</taxon>
        <taxon>Murinae</taxon>
        <taxon>Mus</taxon>
        <taxon>Mus</taxon>
    </lineage>
</organism>
<comment type="function">
    <text evidence="1 7">Plays a role in plasma membrane repair in a process involving annexins (PubMed:33496727). Does not exhibit calcium-activated chloride channel (CaCC) activity.</text>
</comment>
<comment type="subcellular location">
    <subcellularLocation>
        <location evidence="5">Endoplasmic reticulum membrane</location>
        <topology evidence="5">Multi-pass membrane protein</topology>
    </subcellularLocation>
    <subcellularLocation>
        <location evidence="5">Cell membrane</location>
        <topology evidence="2">Multi-pass membrane protein</topology>
    </subcellularLocation>
    <text evidence="1">Colocalized with CALR/calreticulin. Shows an intracellular localization.</text>
</comment>
<comment type="alternative products">
    <event type="alternative splicing"/>
    <isoform>
        <id>Q75UR0-1</id>
        <name>1</name>
        <sequence type="displayed"/>
    </isoform>
    <isoform>
        <id>Q75UR0-2</id>
        <name>2</name>
        <sequence type="described" ref="VSP_015628 VSP_015629 VSP_015630 VSP_015631"/>
    </isoform>
    <isoform>
        <id>Q75UR0-3</id>
        <name>3</name>
        <sequence type="described" ref="VSP_035571 VSP_035572"/>
    </isoform>
    <text>At least 14 isoforms are produced using different combinations of exons 4, 6, 16, 20 and 21.</text>
</comment>
<comment type="tissue specificity">
    <text evidence="3 4 5 6">Highly expressed in skeletal muscle, bone tissues and thyroid gland.</text>
</comment>
<comment type="developmental stage">
    <text evidence="5">In the developing embryo, expressed mainly in differentiating and developing somites and is associated with myotomal somite lineages.</text>
</comment>
<comment type="induction">
    <text evidence="3 4">Up-regulated during the course of myogenic differentiation. Down-regulated during osteoblastic differentiation.</text>
</comment>
<comment type="miscellaneous">
    <text>The term 'anoctamin' was coined because these channels are anion selective and have eight (OCT) transmembrane segments. There is some dissatisfaction in the field with the Ano nomenclature because it is not certain that all the members of this family are anion channels or have the 8-transmembrane topology.</text>
</comment>
<comment type="similarity">
    <text evidence="10">Belongs to the anoctamin family.</text>
</comment>
<proteinExistence type="evidence at transcript level"/>
<gene>
    <name type="primary">Ano5</name>
    <name type="synonym">Gdd1</name>
    <name type="synonym">Tmem16e</name>
</gene>
<accession>Q75UR0</accession>
<accession>Q2VPA8</accession>
<accession>Q3V657</accession>
<accession>Q8CC04</accession>
<feature type="chain" id="PRO_0000191756" description="Anoctamin-5">
    <location>
        <begin position="1"/>
        <end position="904"/>
    </location>
</feature>
<feature type="topological domain" description="Cytoplasmic" evidence="2">
    <location>
        <begin position="1"/>
        <end position="290"/>
    </location>
</feature>
<feature type="transmembrane region" description="Helical" evidence="2">
    <location>
        <begin position="291"/>
        <end position="311"/>
    </location>
</feature>
<feature type="topological domain" description="Extracellular" evidence="2">
    <location>
        <begin position="312"/>
        <end position="371"/>
    </location>
</feature>
<feature type="transmembrane region" description="Helical" evidence="2">
    <location>
        <begin position="372"/>
        <end position="392"/>
    </location>
</feature>
<feature type="topological domain" description="Cytoplasmic" evidence="2">
    <location>
        <begin position="393"/>
        <end position="453"/>
    </location>
</feature>
<feature type="transmembrane region" description="Helical" evidence="2">
    <location>
        <begin position="454"/>
        <end position="474"/>
    </location>
</feature>
<feature type="topological domain" description="Extracellular" evidence="2">
    <location>
        <begin position="475"/>
        <end position="502"/>
    </location>
</feature>
<feature type="transmembrane region" description="Helical" evidence="2">
    <location>
        <begin position="503"/>
        <end position="523"/>
    </location>
</feature>
<feature type="topological domain" description="Cytoplasmic" evidence="2">
    <location>
        <begin position="524"/>
        <end position="548"/>
    </location>
</feature>
<feature type="transmembrane region" description="Helical" evidence="2">
    <location>
        <begin position="549"/>
        <end position="569"/>
    </location>
</feature>
<feature type="topological domain" description="Extracellular" evidence="2">
    <location>
        <begin position="570"/>
        <end position="667"/>
    </location>
</feature>
<feature type="transmembrane region" description="Helical" evidence="2">
    <location>
        <begin position="668"/>
        <end position="688"/>
    </location>
</feature>
<feature type="topological domain" description="Cytoplasmic" evidence="2">
    <location>
        <begin position="689"/>
        <end position="723"/>
    </location>
</feature>
<feature type="transmembrane region" description="Helical" evidence="2">
    <location>
        <begin position="724"/>
        <end position="744"/>
    </location>
</feature>
<feature type="topological domain" description="Extracellular" evidence="2">
    <location>
        <begin position="745"/>
        <end position="825"/>
    </location>
</feature>
<feature type="transmembrane region" description="Helical" evidence="2">
    <location>
        <begin position="826"/>
        <end position="846"/>
    </location>
</feature>
<feature type="topological domain" description="Cytoplasmic" evidence="2">
    <location>
        <begin position="847"/>
        <end position="904"/>
    </location>
</feature>
<feature type="glycosylation site" description="N-linked (GlcNAc...) asparagine" evidence="2">
    <location>
        <position position="326"/>
    </location>
</feature>
<feature type="glycosylation site" description="N-linked (GlcNAc...) asparagine" evidence="2">
    <location>
        <position position="357"/>
    </location>
</feature>
<feature type="glycosylation site" description="N-linked (GlcNAc...) asparagine" evidence="2">
    <location>
        <position position="371"/>
    </location>
</feature>
<feature type="glycosylation site" description="N-linked (GlcNAc...) asparagine" evidence="2">
    <location>
        <position position="759"/>
    </location>
</feature>
<feature type="glycosylation site" description="N-linked (GlcNAc...) asparagine" evidence="2">
    <location>
        <position position="769"/>
    </location>
</feature>
<feature type="glycosylation site" description="N-linked (GlcNAc...) asparagine" evidence="2">
    <location>
        <position position="782"/>
    </location>
</feature>
<feature type="splice variant" id="VSP_015628" description="In isoform 2." evidence="9">
    <location>
        <begin position="1"/>
        <end position="33"/>
    </location>
</feature>
<feature type="splice variant" id="VSP_015629" description="In isoform 2." evidence="9">
    <original>DLQSPPEKRFNLFLRRRLM</original>
    <variation>MNLGSKETSFLIPEDLQSP</variation>
    <location>
        <begin position="34"/>
        <end position="52"/>
    </location>
</feature>
<feature type="splice variant" id="VSP_035571" description="In isoform 3." evidence="8">
    <location>
        <begin position="39"/>
        <end position="52"/>
    </location>
</feature>
<feature type="splice variant" id="VSP_035572" description="In isoform 3." evidence="8">
    <location>
        <begin position="535"/>
        <end position="570"/>
    </location>
</feature>
<feature type="splice variant" id="VSP_015630" description="In isoform 2." evidence="9">
    <original>RYRDYRYPPD</original>
    <variation>STSCFCLNFY</variation>
    <location>
        <begin position="796"/>
        <end position="805"/>
    </location>
</feature>
<feature type="splice variant" id="VSP_015631" description="In isoform 2." evidence="9">
    <location>
        <begin position="806"/>
        <end position="904"/>
    </location>
</feature>